<accession>P38242</accession>
<accession>D6VQ69</accession>
<feature type="chain" id="PRO_0000123818" description="UDP-N-acetylglucosamine transferase subunit ALG14">
    <location>
        <begin position="1"/>
        <end position="237"/>
    </location>
</feature>
<feature type="topological domain" description="Lumenal" evidence="6">
    <location>
        <begin position="1"/>
        <end position="7"/>
    </location>
</feature>
<feature type="transmembrane region" description="Helical" evidence="1">
    <location>
        <begin position="8"/>
        <end position="28"/>
    </location>
</feature>
<feature type="topological domain" description="Cytoplasmic" evidence="6">
    <location>
        <begin position="29"/>
        <end position="237"/>
    </location>
</feature>
<proteinExistence type="evidence at protein level"/>
<protein>
    <recommendedName>
        <fullName>UDP-N-acetylglucosamine transferase subunit ALG14</fullName>
    </recommendedName>
    <alternativeName>
        <fullName>Asparagine-linked glycosylation protein 14</fullName>
    </alternativeName>
</protein>
<evidence type="ECO:0000255" key="1"/>
<evidence type="ECO:0000269" key="2">
    <source>
    </source>
</evidence>
<evidence type="ECO:0000269" key="3">
    <source>
    </source>
</evidence>
<evidence type="ECO:0000269" key="4">
    <source>
    </source>
</evidence>
<evidence type="ECO:0000269" key="5">
    <source>
    </source>
</evidence>
<evidence type="ECO:0000269" key="6">
    <source>
    </source>
</evidence>
<evidence type="ECO:0000305" key="7"/>
<organism>
    <name type="scientific">Saccharomyces cerevisiae (strain ATCC 204508 / S288c)</name>
    <name type="common">Baker's yeast</name>
    <dbReference type="NCBI Taxonomy" id="559292"/>
    <lineage>
        <taxon>Eukaryota</taxon>
        <taxon>Fungi</taxon>
        <taxon>Dikarya</taxon>
        <taxon>Ascomycota</taxon>
        <taxon>Saccharomycotina</taxon>
        <taxon>Saccharomycetes</taxon>
        <taxon>Saccharomycetales</taxon>
        <taxon>Saccharomycetaceae</taxon>
        <taxon>Saccharomyces</taxon>
    </lineage>
</organism>
<sequence length="237" mass="27035">MKTAYLASLVLIVSTAYVIRLIAILPFFHTQAGTEKDTKDGVNLLKIRKSSKKPLKIFVFLGSGGHTGEMIRLLENYQDLLLGKSIVYLGYSDEASRQRFAHFIKKFGHCKVKYYEFMKAREVKATLLQSVKTIIGTLVQSFVHVVRIRFAMCGSPHLFLLNGPGTCCIISFWLKIMELLLPLLGSSHIVYVESLARINTPSLTGKILYWVVDEFIVQWQELRDNYLPRSKWFGILV</sequence>
<gene>
    <name type="primary">ALG14</name>
    <name type="ordered locus">YBR070C</name>
    <name type="ORF">YBR0711</name>
</gene>
<keyword id="KW-0256">Endoplasmic reticulum</keyword>
<keyword id="KW-0472">Membrane</keyword>
<keyword id="KW-0539">Nucleus</keyword>
<keyword id="KW-1185">Reference proteome</keyword>
<keyword id="KW-0812">Transmembrane</keyword>
<keyword id="KW-1133">Transmembrane helix</keyword>
<reference key="1">
    <citation type="journal article" date="1994" name="Yeast">
        <title>Sequence analysis of a 31 kb DNA fragment from the right arm of Saccharomyces cerevisiae chromosome II.</title>
        <authorList>
            <person name="van der Aart Q.J.M."/>
            <person name="Barthe C."/>
            <person name="Doignon F."/>
            <person name="Aigle M."/>
            <person name="Crouzet M."/>
            <person name="Steensma H.Y."/>
        </authorList>
    </citation>
    <scope>NUCLEOTIDE SEQUENCE [LARGE SCALE GENOMIC DNA]</scope>
    <source>
        <strain>ATCC 204508 / S288c</strain>
    </source>
</reference>
<reference key="2">
    <citation type="journal article" date="2014" name="G3 (Bethesda)">
        <title>The reference genome sequence of Saccharomyces cerevisiae: Then and now.</title>
        <authorList>
            <person name="Engel S.R."/>
            <person name="Dietrich F.S."/>
            <person name="Fisk D.G."/>
            <person name="Binkley G."/>
            <person name="Balakrishnan R."/>
            <person name="Costanzo M.C."/>
            <person name="Dwight S.S."/>
            <person name="Hitz B.C."/>
            <person name="Karra K."/>
            <person name="Nash R.S."/>
            <person name="Weng S."/>
            <person name="Wong E.D."/>
            <person name="Lloyd P."/>
            <person name="Skrzypek M.S."/>
            <person name="Miyasato S.R."/>
            <person name="Simison M."/>
            <person name="Cherry J.M."/>
        </authorList>
    </citation>
    <scope>GENOME REANNOTATION</scope>
    <source>
        <strain>ATCC 204508 / S288c</strain>
    </source>
</reference>
<reference key="3">
    <citation type="journal article" date="1994" name="EMBO J.">
        <title>Complete DNA sequence of yeast chromosome II.</title>
        <authorList>
            <person name="Feldmann H."/>
            <person name="Aigle M."/>
            <person name="Aljinovic G."/>
            <person name="Andre B."/>
            <person name="Baclet M.C."/>
            <person name="Barthe C."/>
            <person name="Baur A."/>
            <person name="Becam A.-M."/>
            <person name="Biteau N."/>
            <person name="Boles E."/>
            <person name="Brandt T."/>
            <person name="Brendel M."/>
            <person name="Brueckner M."/>
            <person name="Bussereau F."/>
            <person name="Christiansen C."/>
            <person name="Contreras R."/>
            <person name="Crouzet M."/>
            <person name="Cziepluch C."/>
            <person name="Demolis N."/>
            <person name="Delaveau T."/>
            <person name="Doignon F."/>
            <person name="Domdey H."/>
            <person name="Duesterhus S."/>
            <person name="Dubois E."/>
            <person name="Dujon B."/>
            <person name="El Bakkoury M."/>
            <person name="Entian K.-D."/>
            <person name="Feuermann M."/>
            <person name="Fiers W."/>
            <person name="Fobo G.M."/>
            <person name="Fritz C."/>
            <person name="Gassenhuber J."/>
            <person name="Glansdorff N."/>
            <person name="Goffeau A."/>
            <person name="Grivell L.A."/>
            <person name="de Haan M."/>
            <person name="Hein C."/>
            <person name="Herbert C.J."/>
            <person name="Hollenberg C.P."/>
            <person name="Holmstroem K."/>
            <person name="Jacq C."/>
            <person name="Jacquet M."/>
            <person name="Jauniaux J.-C."/>
            <person name="Jonniaux J.-L."/>
            <person name="Kallesoee T."/>
            <person name="Kiesau P."/>
            <person name="Kirchrath L."/>
            <person name="Koetter P."/>
            <person name="Korol S."/>
            <person name="Liebl S."/>
            <person name="Logghe M."/>
            <person name="Lohan A.J.E."/>
            <person name="Louis E.J."/>
            <person name="Li Z.Y."/>
            <person name="Maat M.J."/>
            <person name="Mallet L."/>
            <person name="Mannhaupt G."/>
            <person name="Messenguy F."/>
            <person name="Miosga T."/>
            <person name="Molemans F."/>
            <person name="Mueller S."/>
            <person name="Nasr F."/>
            <person name="Obermaier B."/>
            <person name="Perea J."/>
            <person name="Pierard A."/>
            <person name="Piravandi E."/>
            <person name="Pohl F.M."/>
            <person name="Pohl T.M."/>
            <person name="Potier S."/>
            <person name="Proft M."/>
            <person name="Purnelle B."/>
            <person name="Ramezani Rad M."/>
            <person name="Rieger M."/>
            <person name="Rose M."/>
            <person name="Schaaff-Gerstenschlaeger I."/>
            <person name="Scherens B."/>
            <person name="Schwarzlose C."/>
            <person name="Skala J."/>
            <person name="Slonimski P.P."/>
            <person name="Smits P.H.M."/>
            <person name="Souciet J.-L."/>
            <person name="Steensma H.Y."/>
            <person name="Stucka R."/>
            <person name="Urrestarazu L.A."/>
            <person name="van der Aart Q.J.M."/>
            <person name="Van Dyck L."/>
            <person name="Vassarotti A."/>
            <person name="Vetter I."/>
            <person name="Vierendeels F."/>
            <person name="Vissers S."/>
            <person name="Wagner G."/>
            <person name="de Wergifosse P."/>
            <person name="Wolfe K.H."/>
            <person name="Zagulski M."/>
            <person name="Zimmermann F.K."/>
            <person name="Mewes H.-W."/>
            <person name="Kleine K."/>
        </authorList>
    </citation>
    <scope>NUCLEOTIDE SEQUENCE [LARGE SCALE GENOMIC DNA]</scope>
    <source>
        <strain>ATCC 204508 / S288c</strain>
    </source>
</reference>
<reference key="4">
    <citation type="journal article" date="2003" name="Nature">
        <title>Global analysis of protein expression in yeast.</title>
        <authorList>
            <person name="Ghaemmaghami S."/>
            <person name="Huh W.-K."/>
            <person name="Bower K."/>
            <person name="Howson R.W."/>
            <person name="Belle A."/>
            <person name="Dephoure N."/>
            <person name="O'Shea E.K."/>
            <person name="Weissman J.S."/>
        </authorList>
    </citation>
    <scope>LEVEL OF PROTEIN EXPRESSION [LARGE SCALE ANALYSIS]</scope>
</reference>
<reference key="5">
    <citation type="journal article" date="2004" name="Yeast">
        <title>Localization of proteins that are coordinately expressed with Cln2 during the cell cycle.</title>
        <authorList>
            <person name="Sundin B.A."/>
            <person name="Chiu C.-H."/>
            <person name="Riffle M."/>
            <person name="Davis T.N."/>
            <person name="Muller E.G.D."/>
        </authorList>
    </citation>
    <scope>SUBCELLULAR LOCATION</scope>
</reference>
<reference key="6">
    <citation type="journal article" date="2005" name="J. Biol. Chem.">
        <title>Two proteins homologous to the N- and C-terminal domains of the bacterial glycosyltransferase Murg are required for the second step of dolichyl-linked oligosaccharide synthesis in Saccharomyces cerevisiae.</title>
        <authorList>
            <person name="Chantret I."/>
            <person name="Dancourt J."/>
            <person name="Barbat A."/>
            <person name="Moore S.E.H."/>
        </authorList>
    </citation>
    <scope>FUNCTION</scope>
</reference>
<reference key="7">
    <citation type="journal article" date="2005" name="J. Biol. Chem.">
        <title>Alg14 recruits Alg13 to the cytoplasmic face of the endoplasmic reticulum to form a novel bipartite UDP-N-acetylglucosamine transferase required for the second step of N-linked glycosylation.</title>
        <authorList>
            <person name="Gao X.-D."/>
            <person name="Tachikawa H."/>
            <person name="Sato T."/>
            <person name="Jigami Y."/>
            <person name="Dean N."/>
        </authorList>
    </citation>
    <scope>FUNCTION</scope>
    <scope>INTERACTION WITH ALG13</scope>
    <scope>SUBCELLULAR LOCATION</scope>
</reference>
<reference key="8">
    <citation type="journal article" date="2007" name="J. Biol. Chem.">
        <title>Membrane topology of the Alg14 endoplasmic reticulum UDP-GlcNAc transferase subunit.</title>
        <authorList>
            <person name="Averbeck N."/>
            <person name="Keppler-Ross S."/>
            <person name="Dean N."/>
        </authorList>
    </citation>
    <scope>TOPOLOGY</scope>
    <scope>SUBCELLULAR LOCATION</scope>
</reference>
<dbReference type="EMBL" id="X76294">
    <property type="protein sequence ID" value="CAA53927.1"/>
    <property type="molecule type" value="Genomic_DNA"/>
</dbReference>
<dbReference type="EMBL" id="Z35939">
    <property type="protein sequence ID" value="CAA85014.1"/>
    <property type="molecule type" value="Genomic_DNA"/>
</dbReference>
<dbReference type="EMBL" id="BK006936">
    <property type="protein sequence ID" value="DAA07189.1"/>
    <property type="molecule type" value="Genomic_DNA"/>
</dbReference>
<dbReference type="PIR" id="S45463">
    <property type="entry name" value="S45463"/>
</dbReference>
<dbReference type="RefSeq" id="NP_009626.1">
    <property type="nucleotide sequence ID" value="NM_001178418.1"/>
</dbReference>
<dbReference type="SMR" id="P38242"/>
<dbReference type="BioGRID" id="32773">
    <property type="interactions" value="305"/>
</dbReference>
<dbReference type="ComplexPortal" id="CPX-1643">
    <property type="entry name" value="UDP-N-acetylglucosamine transferase complex"/>
</dbReference>
<dbReference type="DIP" id="DIP-5670N"/>
<dbReference type="FunCoup" id="P38242">
    <property type="interactions" value="395"/>
</dbReference>
<dbReference type="IntAct" id="P38242">
    <property type="interactions" value="6"/>
</dbReference>
<dbReference type="MINT" id="P38242"/>
<dbReference type="STRING" id="4932.YBR070C"/>
<dbReference type="CAZy" id="GT1">
    <property type="family name" value="Glycosyltransferase Family 1"/>
</dbReference>
<dbReference type="iPTMnet" id="P38242"/>
<dbReference type="PaxDb" id="4932-YBR070C"/>
<dbReference type="PeptideAtlas" id="P38242"/>
<dbReference type="EnsemblFungi" id="YBR070C_mRNA">
    <property type="protein sequence ID" value="YBR070C"/>
    <property type="gene ID" value="YBR070C"/>
</dbReference>
<dbReference type="GeneID" id="852362"/>
<dbReference type="KEGG" id="sce:YBR070C"/>
<dbReference type="AGR" id="SGD:S000000274"/>
<dbReference type="SGD" id="S000000274">
    <property type="gene designation" value="ALG14"/>
</dbReference>
<dbReference type="VEuPathDB" id="FungiDB:YBR070C"/>
<dbReference type="eggNOG" id="KOG3339">
    <property type="taxonomic scope" value="Eukaryota"/>
</dbReference>
<dbReference type="GeneTree" id="ENSGT00390000002579"/>
<dbReference type="HOGENOM" id="CLU_064541_2_2_1"/>
<dbReference type="InParanoid" id="P38242"/>
<dbReference type="OMA" id="GTCCIIT"/>
<dbReference type="OrthoDB" id="17098at2759"/>
<dbReference type="BioCyc" id="MetaCyc:MONOMER3O-23"/>
<dbReference type="BioCyc" id="YEAST:MONOMER3O-23"/>
<dbReference type="BRENDA" id="2.4.1.141">
    <property type="organism ID" value="984"/>
</dbReference>
<dbReference type="BioGRID-ORCS" id="852362">
    <property type="hits" value="0 hits in 10 CRISPR screens"/>
</dbReference>
<dbReference type="PRO" id="PR:P38242"/>
<dbReference type="Proteomes" id="UP000002311">
    <property type="component" value="Chromosome II"/>
</dbReference>
<dbReference type="RNAct" id="P38242">
    <property type="molecule type" value="protein"/>
</dbReference>
<dbReference type="GO" id="GO:0098548">
    <property type="term" value="C:cytoplasmic side of Golgi membrane"/>
    <property type="evidence" value="ECO:0000314"/>
    <property type="project" value="ComplexPortal"/>
</dbReference>
<dbReference type="GO" id="GO:0005789">
    <property type="term" value="C:endoplasmic reticulum membrane"/>
    <property type="evidence" value="ECO:0000314"/>
    <property type="project" value="SGD"/>
</dbReference>
<dbReference type="GO" id="GO:0005811">
    <property type="term" value="C:lipid droplet"/>
    <property type="evidence" value="ECO:0000314"/>
    <property type="project" value="SGD"/>
</dbReference>
<dbReference type="GO" id="GO:0031965">
    <property type="term" value="C:nuclear membrane"/>
    <property type="evidence" value="ECO:0007669"/>
    <property type="project" value="UniProtKB-SubCell"/>
</dbReference>
<dbReference type="GO" id="GO:0042175">
    <property type="term" value="C:nuclear outer membrane-endoplasmic reticulum membrane network"/>
    <property type="evidence" value="ECO:0000314"/>
    <property type="project" value="SGD"/>
</dbReference>
<dbReference type="GO" id="GO:0005777">
    <property type="term" value="C:peroxisome"/>
    <property type="evidence" value="ECO:0007005"/>
    <property type="project" value="SGD"/>
</dbReference>
<dbReference type="GO" id="GO:0043541">
    <property type="term" value="C:UDP-N-acetylglucosamine transferase complex"/>
    <property type="evidence" value="ECO:0000353"/>
    <property type="project" value="ComplexPortal"/>
</dbReference>
<dbReference type="GO" id="GO:0043495">
    <property type="term" value="F:protein-membrane adaptor activity"/>
    <property type="evidence" value="ECO:0000315"/>
    <property type="project" value="SGD"/>
</dbReference>
<dbReference type="GO" id="GO:0006488">
    <property type="term" value="P:dolichol-linked oligosaccharide biosynthetic process"/>
    <property type="evidence" value="ECO:0000314"/>
    <property type="project" value="ComplexPortal"/>
</dbReference>
<dbReference type="Gene3D" id="3.40.50.2000">
    <property type="entry name" value="Glycogen Phosphorylase B"/>
    <property type="match status" value="1"/>
</dbReference>
<dbReference type="InterPro" id="IPR013969">
    <property type="entry name" value="Oligosacch_biosynth_Alg14"/>
</dbReference>
<dbReference type="PANTHER" id="PTHR12154">
    <property type="entry name" value="GLYCOSYL TRANSFERASE-RELATED"/>
    <property type="match status" value="1"/>
</dbReference>
<dbReference type="PANTHER" id="PTHR12154:SF4">
    <property type="entry name" value="UDP-N-ACETYLGLUCOSAMINE TRANSFERASE SUBUNIT ALG14 HOMOLOG"/>
    <property type="match status" value="1"/>
</dbReference>
<dbReference type="Pfam" id="PF08660">
    <property type="entry name" value="Alg14"/>
    <property type="match status" value="1"/>
</dbReference>
<comment type="function">
    <text evidence="4 5">Involved in protein N-glycosylation. Essential for the second step of the dolichol-linked oligosaccharide pathway. Anchors the catalytic subunit ALG13 to the ER.</text>
</comment>
<comment type="subunit">
    <text>Heterodimer with ALG13 to form a functional enzyme.</text>
</comment>
<comment type="interaction">
    <interactant intactId="EBI-21477">
        <id>P38242</id>
    </interactant>
    <interactant intactId="EBI-23770">
        <id>P53178</id>
        <label>ALG13</label>
    </interactant>
    <organismsDiffer>false</organismsDiffer>
    <experiments>3</experiments>
</comment>
<comment type="subcellular location">
    <subcellularLocation>
        <location evidence="3 5 6">Endoplasmic reticulum membrane</location>
        <topology evidence="1">Single-pass membrane protein</topology>
    </subcellularLocation>
    <subcellularLocation>
        <location evidence="3">Nucleus membrane</location>
        <topology evidence="1">Single-pass membrane protein</topology>
    </subcellularLocation>
</comment>
<comment type="miscellaneous">
    <text evidence="2">Present with 339 molecules/cell in log phase SD medium.</text>
</comment>
<comment type="similarity">
    <text evidence="7">Belongs to the ALG14 family.</text>
</comment>
<name>ALG14_YEAST</name>